<dbReference type="EC" id="4.1.1.39" evidence="1"/>
<dbReference type="EMBL" id="CU234118">
    <property type="protein sequence ID" value="CAL76109.1"/>
    <property type="molecule type" value="Genomic_DNA"/>
</dbReference>
<dbReference type="RefSeq" id="WP_011925328.1">
    <property type="nucleotide sequence ID" value="NC_009445.1"/>
</dbReference>
<dbReference type="SMR" id="A4YQD3"/>
<dbReference type="STRING" id="114615.BRADO2274"/>
<dbReference type="KEGG" id="bra:BRADO2274"/>
<dbReference type="eggNOG" id="COG1850">
    <property type="taxonomic scope" value="Bacteria"/>
</dbReference>
<dbReference type="HOGENOM" id="CLU_031450_2_0_5"/>
<dbReference type="OrthoDB" id="9764279at2"/>
<dbReference type="Proteomes" id="UP000001994">
    <property type="component" value="Chromosome"/>
</dbReference>
<dbReference type="GO" id="GO:0000287">
    <property type="term" value="F:magnesium ion binding"/>
    <property type="evidence" value="ECO:0007669"/>
    <property type="project" value="UniProtKB-UniRule"/>
</dbReference>
<dbReference type="GO" id="GO:0004497">
    <property type="term" value="F:monooxygenase activity"/>
    <property type="evidence" value="ECO:0007669"/>
    <property type="project" value="UniProtKB-KW"/>
</dbReference>
<dbReference type="GO" id="GO:0016984">
    <property type="term" value="F:ribulose-bisphosphate carboxylase activity"/>
    <property type="evidence" value="ECO:0007669"/>
    <property type="project" value="UniProtKB-UniRule"/>
</dbReference>
<dbReference type="GO" id="GO:0019253">
    <property type="term" value="P:reductive pentose-phosphate cycle"/>
    <property type="evidence" value="ECO:0007669"/>
    <property type="project" value="UniProtKB-UniRule"/>
</dbReference>
<dbReference type="Gene3D" id="3.20.20.110">
    <property type="entry name" value="Ribulose bisphosphate carboxylase, large subunit, C-terminal domain"/>
    <property type="match status" value="1"/>
</dbReference>
<dbReference type="Gene3D" id="3.30.70.150">
    <property type="entry name" value="RuBisCO large subunit, N-terminal domain"/>
    <property type="match status" value="1"/>
</dbReference>
<dbReference type="HAMAP" id="MF_01338">
    <property type="entry name" value="RuBisCO_L_type1"/>
    <property type="match status" value="1"/>
</dbReference>
<dbReference type="InterPro" id="IPR033966">
    <property type="entry name" value="RuBisCO"/>
</dbReference>
<dbReference type="InterPro" id="IPR020878">
    <property type="entry name" value="RuBisCo_large_chain_AS"/>
</dbReference>
<dbReference type="InterPro" id="IPR000685">
    <property type="entry name" value="RuBisCO_lsu_C"/>
</dbReference>
<dbReference type="InterPro" id="IPR036376">
    <property type="entry name" value="RuBisCO_lsu_C_sf"/>
</dbReference>
<dbReference type="InterPro" id="IPR017443">
    <property type="entry name" value="RuBisCO_lsu_fd_N"/>
</dbReference>
<dbReference type="InterPro" id="IPR036422">
    <property type="entry name" value="RuBisCO_lsu_N_sf"/>
</dbReference>
<dbReference type="InterPro" id="IPR020888">
    <property type="entry name" value="RuBisCO_lsuI"/>
</dbReference>
<dbReference type="NCBIfam" id="NF003252">
    <property type="entry name" value="PRK04208.1"/>
    <property type="match status" value="1"/>
</dbReference>
<dbReference type="PANTHER" id="PTHR42704">
    <property type="entry name" value="RIBULOSE BISPHOSPHATE CARBOXYLASE"/>
    <property type="match status" value="1"/>
</dbReference>
<dbReference type="PANTHER" id="PTHR42704:SF17">
    <property type="entry name" value="RIBULOSE BISPHOSPHATE CARBOXYLASE LARGE CHAIN"/>
    <property type="match status" value="1"/>
</dbReference>
<dbReference type="Pfam" id="PF00016">
    <property type="entry name" value="RuBisCO_large"/>
    <property type="match status" value="1"/>
</dbReference>
<dbReference type="Pfam" id="PF02788">
    <property type="entry name" value="RuBisCO_large_N"/>
    <property type="match status" value="1"/>
</dbReference>
<dbReference type="SFLD" id="SFLDG01052">
    <property type="entry name" value="RuBisCO"/>
    <property type="match status" value="1"/>
</dbReference>
<dbReference type="SFLD" id="SFLDS00014">
    <property type="entry name" value="RuBisCO"/>
    <property type="match status" value="1"/>
</dbReference>
<dbReference type="SFLD" id="SFLDG00301">
    <property type="entry name" value="RuBisCO-like_proteins"/>
    <property type="match status" value="1"/>
</dbReference>
<dbReference type="SUPFAM" id="SSF51649">
    <property type="entry name" value="RuBisCo, C-terminal domain"/>
    <property type="match status" value="1"/>
</dbReference>
<dbReference type="SUPFAM" id="SSF54966">
    <property type="entry name" value="RuBisCO, large subunit, small (N-terminal) domain"/>
    <property type="match status" value="1"/>
</dbReference>
<dbReference type="PROSITE" id="PS00157">
    <property type="entry name" value="RUBISCO_LARGE"/>
    <property type="match status" value="1"/>
</dbReference>
<reference key="1">
    <citation type="journal article" date="2007" name="Science">
        <title>Legumes symbioses: absence of nod genes in photosynthetic bradyrhizobia.</title>
        <authorList>
            <person name="Giraud E."/>
            <person name="Moulin L."/>
            <person name="Vallenet D."/>
            <person name="Barbe V."/>
            <person name="Cytryn E."/>
            <person name="Avarre J.-C."/>
            <person name="Jaubert M."/>
            <person name="Simon D."/>
            <person name="Cartieaux F."/>
            <person name="Prin Y."/>
            <person name="Bena G."/>
            <person name="Hannibal L."/>
            <person name="Fardoux J."/>
            <person name="Kojadinovic M."/>
            <person name="Vuillet L."/>
            <person name="Lajus A."/>
            <person name="Cruveiller S."/>
            <person name="Rouy Z."/>
            <person name="Mangenot S."/>
            <person name="Segurens B."/>
            <person name="Dossat C."/>
            <person name="Franck W.L."/>
            <person name="Chang W.-S."/>
            <person name="Saunders E."/>
            <person name="Bruce D."/>
            <person name="Richardson P."/>
            <person name="Normand P."/>
            <person name="Dreyfus B."/>
            <person name="Pignol D."/>
            <person name="Stacey G."/>
            <person name="Emerich D."/>
            <person name="Vermeglio A."/>
            <person name="Medigue C."/>
            <person name="Sadowsky M."/>
        </authorList>
    </citation>
    <scope>NUCLEOTIDE SEQUENCE [LARGE SCALE GENOMIC DNA]</scope>
    <source>
        <strain>ORS 278</strain>
    </source>
</reference>
<protein>
    <recommendedName>
        <fullName evidence="1">Ribulose bisphosphate carboxylase large chain 2</fullName>
        <shortName evidence="1">RuBisCO large subunit 2</shortName>
        <ecNumber evidence="1">4.1.1.39</ecNumber>
    </recommendedName>
</protein>
<gene>
    <name evidence="1" type="primary">cbbL2</name>
    <name type="ordered locus">BRADO2274</name>
</gene>
<organism>
    <name type="scientific">Bradyrhizobium sp. (strain ORS 278)</name>
    <dbReference type="NCBI Taxonomy" id="114615"/>
    <lineage>
        <taxon>Bacteria</taxon>
        <taxon>Pseudomonadati</taxon>
        <taxon>Pseudomonadota</taxon>
        <taxon>Alphaproteobacteria</taxon>
        <taxon>Hyphomicrobiales</taxon>
        <taxon>Nitrobacteraceae</taxon>
        <taxon>Bradyrhizobium</taxon>
    </lineage>
</organism>
<comment type="function">
    <text evidence="1">RuBisCO catalyzes two reactions: the carboxylation of D-ribulose 1,5-bisphosphate, the primary event in carbon dioxide fixation, as well as the oxidative fragmentation of the pentose substrate. Both reactions occur simultaneously and in competition at the same active site.</text>
</comment>
<comment type="catalytic activity">
    <reaction evidence="1">
        <text>2 (2R)-3-phosphoglycerate + 2 H(+) = D-ribulose 1,5-bisphosphate + CO2 + H2O</text>
        <dbReference type="Rhea" id="RHEA:23124"/>
        <dbReference type="ChEBI" id="CHEBI:15377"/>
        <dbReference type="ChEBI" id="CHEBI:15378"/>
        <dbReference type="ChEBI" id="CHEBI:16526"/>
        <dbReference type="ChEBI" id="CHEBI:57870"/>
        <dbReference type="ChEBI" id="CHEBI:58272"/>
        <dbReference type="EC" id="4.1.1.39"/>
    </reaction>
</comment>
<comment type="catalytic activity">
    <reaction evidence="1">
        <text>D-ribulose 1,5-bisphosphate + O2 = 2-phosphoglycolate + (2R)-3-phosphoglycerate + 2 H(+)</text>
        <dbReference type="Rhea" id="RHEA:36631"/>
        <dbReference type="ChEBI" id="CHEBI:15378"/>
        <dbReference type="ChEBI" id="CHEBI:15379"/>
        <dbReference type="ChEBI" id="CHEBI:57870"/>
        <dbReference type="ChEBI" id="CHEBI:58033"/>
        <dbReference type="ChEBI" id="CHEBI:58272"/>
    </reaction>
</comment>
<comment type="cofactor">
    <cofactor evidence="1">
        <name>Mg(2+)</name>
        <dbReference type="ChEBI" id="CHEBI:18420"/>
    </cofactor>
    <text evidence="1">Binds 1 Mg(2+) ion per subunit.</text>
</comment>
<comment type="subunit">
    <text evidence="1">Heterohexadecamer of 8 large chains and 8 small chains.</text>
</comment>
<comment type="miscellaneous">
    <text evidence="1">The basic functional RuBisCO is composed of a large chain homodimer in a 'head-to-tail' conformation. In form I RuBisCO this homodimer is arranged in a barrel-like tetramer with the small subunits forming a tetrameric 'cap' on each end of the 'barrel'.</text>
</comment>
<comment type="similarity">
    <text evidence="1">Belongs to the RuBisCO large chain family. Type I subfamily.</text>
</comment>
<keyword id="KW-0113">Calvin cycle</keyword>
<keyword id="KW-0120">Carbon dioxide fixation</keyword>
<keyword id="KW-0456">Lyase</keyword>
<keyword id="KW-0460">Magnesium</keyword>
<keyword id="KW-0479">Metal-binding</keyword>
<keyword id="KW-0503">Monooxygenase</keyword>
<keyword id="KW-0560">Oxidoreductase</keyword>
<keyword id="KW-0602">Photosynthesis</keyword>
<keyword id="KW-1185">Reference proteome</keyword>
<feature type="chain" id="PRO_0000299962" description="Ribulose bisphosphate carboxylase large chain 2">
    <location>
        <begin position="1"/>
        <end position="479"/>
    </location>
</feature>
<feature type="active site" description="Proton acceptor" evidence="1">
    <location>
        <position position="168"/>
    </location>
</feature>
<feature type="active site" description="Proton acceptor" evidence="1">
    <location>
        <position position="287"/>
    </location>
</feature>
<feature type="binding site" description="in homodimeric partner" evidence="1">
    <location>
        <position position="116"/>
    </location>
    <ligand>
        <name>substrate</name>
    </ligand>
</feature>
<feature type="binding site" evidence="1">
    <location>
        <position position="166"/>
    </location>
    <ligand>
        <name>substrate</name>
    </ligand>
</feature>
<feature type="binding site" evidence="1">
    <location>
        <position position="170"/>
    </location>
    <ligand>
        <name>substrate</name>
    </ligand>
</feature>
<feature type="binding site" description="via carbamate group" evidence="1">
    <location>
        <position position="194"/>
    </location>
    <ligand>
        <name>Mg(2+)</name>
        <dbReference type="ChEBI" id="CHEBI:18420"/>
    </ligand>
</feature>
<feature type="binding site" evidence="1">
    <location>
        <position position="196"/>
    </location>
    <ligand>
        <name>Mg(2+)</name>
        <dbReference type="ChEBI" id="CHEBI:18420"/>
    </ligand>
</feature>
<feature type="binding site" evidence="1">
    <location>
        <position position="197"/>
    </location>
    <ligand>
        <name>Mg(2+)</name>
        <dbReference type="ChEBI" id="CHEBI:18420"/>
    </ligand>
</feature>
<feature type="binding site" evidence="1">
    <location>
        <position position="288"/>
    </location>
    <ligand>
        <name>substrate</name>
    </ligand>
</feature>
<feature type="binding site" evidence="1">
    <location>
        <position position="320"/>
    </location>
    <ligand>
        <name>substrate</name>
    </ligand>
</feature>
<feature type="binding site" evidence="1">
    <location>
        <position position="372"/>
    </location>
    <ligand>
        <name>substrate</name>
    </ligand>
</feature>
<feature type="site" description="Transition state stabilizer" evidence="1">
    <location>
        <position position="327"/>
    </location>
</feature>
<feature type="modified residue" description="N6-carboxylysine" evidence="1">
    <location>
        <position position="194"/>
    </location>
</feature>
<sequence>MAEKSYQAGVKEYRKTYWTPEYVPLDTDLLAVFKIVAQAGVPREEAAAAVAAESSTGTWTTVWTDLLTDLDYYKGRAYRIEPVPGDDNAFYAFIAYPIDLFEEGSVVNVLTSLVGNVFGFKAVRSLRLEDIRFPLAYVKTCGGPPNGIQLERDRLNKYGRPLLGCTIKPKLGLSAKNYGRAVYECLRGGLDFTKDDENINSQPFMRWQHRFEFVMEAVHKATSETGERKGHYLNVTAPTPEEMYKRAEFAKSLGAPIIMHDFLTAGFTANTGLANWCRENGMLLHIHRAMHAVLDRNPMHGIHFRVLTKCLRLSGGDHLHSGTVVGKLEGDREATIGWVDLMREPFVPENRARGIFFDQDWGAMPGVMPVASGGIHVWHMPALTAIFGDDACFQFGGGTLGHPWGNAAGAHANRVALEACVEARNQGRPVEREGREILTEAAQHSPELKIAMETWKEIKFEFDVVDKLDTGPMLRVVNA</sequence>
<proteinExistence type="inferred from homology"/>
<evidence type="ECO:0000255" key="1">
    <source>
        <dbReference type="HAMAP-Rule" id="MF_01338"/>
    </source>
</evidence>
<accession>A4YQD3</accession>
<name>RBL1B_BRASO</name>